<sequence>MSAVSYSMHRTTTTTSSSSHGGVSAGHAAEEFVASAEREKQEMQQLNSRLEVYISRVRQLEDRNKELVIELDTLRGSLGNDIGQIKFKFNDSLVKVRREISEAHSGTIGVEVKVDRLRDDLNDYRHRYEEARREVEREKTTWGGAISQAQAELDTNKSRYAAILDEEKRLYAEQDQLYLQLAAAKDELDAAIVDRRRLQAEEDDLKIELEFLGRIHSQEITELRTLLAQAPADTREFFKNELALAIREIKAEYDKIIQTTRVDLETIFQSKISAVESSIVSKNEAAVFRQEEIRKMNESITTLRAKLSELEARNSALEREANTLQIQLGEDQRAYESELHKRDNALRFMREDCQTLIAELQALLNTKQTLDTEIAIYRKLVESEEGRFTHVGQGVVVAQQETTRLVPVEQDHWDSGEVQTRSSFKRHAKGNVSIVECDPQGKYIILENTSGSVAEDVSNFEIRRVIDGVQAFVFRLPSHLVIQQHGHLKIYGRNSGGINSPPDSIVMESHPSWGQGGQVETFLYNSHGIEKASHIQTTVASSR</sequence>
<evidence type="ECO:0000255" key="1">
    <source>
        <dbReference type="PROSITE-ProRule" id="PRU01187"/>
    </source>
</evidence>
<evidence type="ECO:0000255" key="2">
    <source>
        <dbReference type="PROSITE-ProRule" id="PRU01188"/>
    </source>
</evidence>
<evidence type="ECO:0000256" key="3">
    <source>
        <dbReference type="SAM" id="MobiDB-lite"/>
    </source>
</evidence>
<evidence type="ECO:0000269" key="4">
    <source>
    </source>
</evidence>
<evidence type="ECO:0000269" key="5">
    <source>
    </source>
</evidence>
<evidence type="ECO:0000305" key="6"/>
<name>IFB2_CAEEL</name>
<gene>
    <name type="primary">ifb-2</name>
    <name type="ORF">F10C1.7</name>
</gene>
<accession>Q19286</accession>
<accession>Q21064</accession>
<accession>Q95QM2</accession>
<feature type="chain" id="PRO_0000063839" description="Intermediate filament protein ifb-2">
    <location>
        <begin position="1"/>
        <end position="543"/>
    </location>
</feature>
<feature type="domain" description="IF rod" evidence="2">
    <location>
        <begin position="39"/>
        <end position="388"/>
    </location>
</feature>
<feature type="domain" description="LTD" evidence="1">
    <location>
        <begin position="420"/>
        <end position="538"/>
    </location>
</feature>
<feature type="region of interest" description="Head">
    <location>
        <begin position="1"/>
        <end position="42"/>
    </location>
</feature>
<feature type="region of interest" description="Disordered" evidence="3">
    <location>
        <begin position="1"/>
        <end position="27"/>
    </location>
</feature>
<feature type="region of interest" description="Coil 1A">
    <location>
        <begin position="43"/>
        <end position="74"/>
    </location>
</feature>
<feature type="region of interest" description="Linker 1">
    <location>
        <begin position="75"/>
        <end position="88"/>
    </location>
</feature>
<feature type="region of interest" description="Coil 1B">
    <location>
        <begin position="89"/>
        <end position="223"/>
    </location>
</feature>
<feature type="region of interest" description="Linker 12">
    <location>
        <begin position="224"/>
        <end position="240"/>
    </location>
</feature>
<feature type="region of interest" description="Coil 2">
    <location>
        <begin position="241"/>
        <end position="387"/>
    </location>
</feature>
<feature type="region of interest" description="Tail">
    <location>
        <begin position="388"/>
        <end position="542"/>
    </location>
</feature>
<feature type="compositionally biased region" description="Polar residues" evidence="3">
    <location>
        <begin position="1"/>
        <end position="10"/>
    </location>
</feature>
<feature type="splice variant" id="VSP_010148" description="In isoform c." evidence="6">
    <location>
        <begin position="388"/>
        <end position="404"/>
    </location>
</feature>
<feature type="sequence conflict" description="In Ref. 1; CAA55296." evidence="6" ref="1">
    <original>A</original>
    <variation>R</variation>
    <location>
        <position position="532"/>
    </location>
</feature>
<keyword id="KW-0025">Alternative splicing</keyword>
<keyword id="KW-0175">Coiled coil</keyword>
<keyword id="KW-0963">Cytoplasm</keyword>
<keyword id="KW-0403">Intermediate filament</keyword>
<keyword id="KW-1185">Reference proteome</keyword>
<dbReference type="EMBL" id="X78553">
    <property type="protein sequence ID" value="CAA55296.1"/>
    <property type="molecule type" value="Genomic_DNA"/>
</dbReference>
<dbReference type="EMBL" id="X78554">
    <property type="protein sequence ID" value="CAA55296.1"/>
    <property type="status" value="JOINED"/>
    <property type="molecule type" value="Genomic_DNA"/>
</dbReference>
<dbReference type="EMBL" id="FO080600">
    <property type="protein sequence ID" value="CCD65033.1"/>
    <property type="molecule type" value="Genomic_DNA"/>
</dbReference>
<dbReference type="EMBL" id="FO080600">
    <property type="protein sequence ID" value="CCD65034.1"/>
    <property type="molecule type" value="Genomic_DNA"/>
</dbReference>
<dbReference type="PIR" id="T16015">
    <property type="entry name" value="T16015"/>
</dbReference>
<dbReference type="RefSeq" id="NP_495133.1">
    <molecule id="Q19286-1"/>
    <property type="nucleotide sequence ID" value="NM_062732.6"/>
</dbReference>
<dbReference type="RefSeq" id="NP_495134.1">
    <molecule id="Q19286-2"/>
    <property type="nucleotide sequence ID" value="NM_062733.7"/>
</dbReference>
<dbReference type="SMR" id="Q19286"/>
<dbReference type="BioGRID" id="39315">
    <property type="interactions" value="19"/>
</dbReference>
<dbReference type="DIP" id="DIP-26763N"/>
<dbReference type="FunCoup" id="Q19286">
    <property type="interactions" value="14"/>
</dbReference>
<dbReference type="IntAct" id="Q19286">
    <property type="interactions" value="12"/>
</dbReference>
<dbReference type="MINT" id="Q19286"/>
<dbReference type="STRING" id="6239.F10C1.7e.1"/>
<dbReference type="iPTMnet" id="Q19286"/>
<dbReference type="PaxDb" id="6239-F10C1.7e"/>
<dbReference type="PeptideAtlas" id="Q19286"/>
<dbReference type="EnsemblMetazoa" id="F10C1.7a.1">
    <molecule id="Q19286-1"/>
    <property type="protein sequence ID" value="F10C1.7a.1"/>
    <property type="gene ID" value="WBGene00002054"/>
</dbReference>
<dbReference type="EnsemblMetazoa" id="F10C1.7c.1">
    <molecule id="Q19286-2"/>
    <property type="protein sequence ID" value="F10C1.7c.1"/>
    <property type="gene ID" value="WBGene00002054"/>
</dbReference>
<dbReference type="GeneID" id="173973"/>
<dbReference type="KEGG" id="cel:CELE_F10C1.7"/>
<dbReference type="UCSC" id="F10C1.7c.1">
    <molecule id="Q19286-1"/>
    <property type="organism name" value="c. elegans"/>
</dbReference>
<dbReference type="AGR" id="WB:WBGene00002054"/>
<dbReference type="CTD" id="173973"/>
<dbReference type="WormBase" id="F10C1.7a">
    <molecule id="Q19286-1"/>
    <property type="protein sequence ID" value="CE02622"/>
    <property type="gene ID" value="WBGene00002054"/>
    <property type="gene designation" value="ifb-2"/>
</dbReference>
<dbReference type="WormBase" id="F10C1.7c">
    <molecule id="Q19286-2"/>
    <property type="protein sequence ID" value="CE27941"/>
    <property type="gene ID" value="WBGene00002054"/>
    <property type="gene designation" value="ifb-2"/>
</dbReference>
<dbReference type="eggNOG" id="KOG0977">
    <property type="taxonomic scope" value="Eukaryota"/>
</dbReference>
<dbReference type="GeneTree" id="ENSGT00970000196708"/>
<dbReference type="InParanoid" id="Q19286"/>
<dbReference type="OrthoDB" id="2441647at2759"/>
<dbReference type="PhylomeDB" id="Q19286"/>
<dbReference type="Reactome" id="R-CEL-2559584">
    <property type="pathway name" value="Formation of Senescence-Associated Heterochromatin Foci (SAHF)"/>
</dbReference>
<dbReference type="Reactome" id="R-CEL-4419969">
    <property type="pathway name" value="Depolymerization of the Nuclear Lamina"/>
</dbReference>
<dbReference type="Reactome" id="R-CEL-9013405">
    <property type="pathway name" value="RHOD GTPase cycle"/>
</dbReference>
<dbReference type="Reactome" id="R-CEL-9035034">
    <property type="pathway name" value="RHOF GTPase cycle"/>
</dbReference>
<dbReference type="SignaLink" id="Q19286"/>
<dbReference type="PRO" id="PR:Q19286"/>
<dbReference type="Proteomes" id="UP000001940">
    <property type="component" value="Chromosome II"/>
</dbReference>
<dbReference type="Bgee" id="WBGene00002054">
    <property type="expression patterns" value="Expressed in larva and 3 other cell types or tissues"/>
</dbReference>
<dbReference type="ExpressionAtlas" id="Q19286">
    <property type="expression patterns" value="baseline"/>
</dbReference>
<dbReference type="GO" id="GO:0045179">
    <property type="term" value="C:apical cortex"/>
    <property type="evidence" value="ECO:0000314"/>
    <property type="project" value="WormBase"/>
</dbReference>
<dbReference type="GO" id="GO:0030054">
    <property type="term" value="C:cell junction"/>
    <property type="evidence" value="ECO:0000314"/>
    <property type="project" value="UniProtKB"/>
</dbReference>
<dbReference type="GO" id="GO:0005737">
    <property type="term" value="C:cytoplasm"/>
    <property type="evidence" value="ECO:0000314"/>
    <property type="project" value="UniProtKB"/>
</dbReference>
<dbReference type="GO" id="GO:0005882">
    <property type="term" value="C:intermediate filament"/>
    <property type="evidence" value="ECO:0007669"/>
    <property type="project" value="UniProtKB-KW"/>
</dbReference>
<dbReference type="GO" id="GO:0005635">
    <property type="term" value="C:nuclear envelope"/>
    <property type="evidence" value="ECO:0000318"/>
    <property type="project" value="GO_Central"/>
</dbReference>
<dbReference type="GO" id="GO:0005652">
    <property type="term" value="C:nuclear lamina"/>
    <property type="evidence" value="ECO:0000318"/>
    <property type="project" value="GO_Central"/>
</dbReference>
<dbReference type="GO" id="GO:1990357">
    <property type="term" value="C:terminal web"/>
    <property type="evidence" value="ECO:0000314"/>
    <property type="project" value="WormBase"/>
</dbReference>
<dbReference type="GO" id="GO:0005200">
    <property type="term" value="F:structural constituent of cytoskeleton"/>
    <property type="evidence" value="ECO:0000318"/>
    <property type="project" value="GO_Central"/>
</dbReference>
<dbReference type="GO" id="GO:0031507">
    <property type="term" value="P:heterochromatin formation"/>
    <property type="evidence" value="ECO:0000318"/>
    <property type="project" value="GO_Central"/>
</dbReference>
<dbReference type="GO" id="GO:0006998">
    <property type="term" value="P:nuclear envelope organization"/>
    <property type="evidence" value="ECO:0000318"/>
    <property type="project" value="GO_Central"/>
</dbReference>
<dbReference type="GO" id="GO:0007097">
    <property type="term" value="P:nuclear migration"/>
    <property type="evidence" value="ECO:0000318"/>
    <property type="project" value="GO_Central"/>
</dbReference>
<dbReference type="GO" id="GO:0051664">
    <property type="term" value="P:nuclear pore localization"/>
    <property type="evidence" value="ECO:0000318"/>
    <property type="project" value="GO_Central"/>
</dbReference>
<dbReference type="GO" id="GO:0090435">
    <property type="term" value="P:protein localization to nuclear envelope"/>
    <property type="evidence" value="ECO:0000318"/>
    <property type="project" value="GO_Central"/>
</dbReference>
<dbReference type="FunFam" id="1.20.5.170:FF:000058">
    <property type="entry name" value="Intermediate filament protein B"/>
    <property type="match status" value="1"/>
</dbReference>
<dbReference type="Gene3D" id="1.20.5.170">
    <property type="match status" value="1"/>
</dbReference>
<dbReference type="Gene3D" id="2.60.40.1260">
    <property type="entry name" value="Lamin Tail domain"/>
    <property type="match status" value="1"/>
</dbReference>
<dbReference type="Gene3D" id="1.20.5.500">
    <property type="entry name" value="Single helix bin"/>
    <property type="match status" value="1"/>
</dbReference>
<dbReference type="Gene3D" id="1.20.5.1160">
    <property type="entry name" value="Vasodilator-stimulated phosphoprotein"/>
    <property type="match status" value="1"/>
</dbReference>
<dbReference type="InterPro" id="IPR039008">
    <property type="entry name" value="IF_rod_dom"/>
</dbReference>
<dbReference type="InterPro" id="IPR016451">
    <property type="entry name" value="Intermed_filament_ifa/ifb"/>
</dbReference>
<dbReference type="InterPro" id="IPR001322">
    <property type="entry name" value="Lamin_tail_dom"/>
</dbReference>
<dbReference type="InterPro" id="IPR036415">
    <property type="entry name" value="Lamin_tail_dom_sf"/>
</dbReference>
<dbReference type="PANTHER" id="PTHR45721:SF7">
    <property type="entry name" value="INTERMEDIATE FILAMENT PROTEIN IFB-2"/>
    <property type="match status" value="1"/>
</dbReference>
<dbReference type="PANTHER" id="PTHR45721">
    <property type="entry name" value="LAMIN DM0-RELATED"/>
    <property type="match status" value="1"/>
</dbReference>
<dbReference type="Pfam" id="PF00038">
    <property type="entry name" value="Filament"/>
    <property type="match status" value="1"/>
</dbReference>
<dbReference type="PIRSF" id="PIRSF005546">
    <property type="entry name" value="Intermed_filamnt_Ifb-2"/>
    <property type="match status" value="1"/>
</dbReference>
<dbReference type="SMART" id="SM01391">
    <property type="entry name" value="Filament"/>
    <property type="match status" value="1"/>
</dbReference>
<dbReference type="SUPFAM" id="SSF64593">
    <property type="entry name" value="Intermediate filament protein, coiled coil region"/>
    <property type="match status" value="2"/>
</dbReference>
<dbReference type="SUPFAM" id="SSF74853">
    <property type="entry name" value="Lamin A/C globular tail domain"/>
    <property type="match status" value="1"/>
</dbReference>
<dbReference type="PROSITE" id="PS51842">
    <property type="entry name" value="IF_ROD_2"/>
    <property type="match status" value="1"/>
</dbReference>
<dbReference type="PROSITE" id="PS51841">
    <property type="entry name" value="LTD"/>
    <property type="match status" value="1"/>
</dbReference>
<proteinExistence type="evidence at protein level"/>
<comment type="function">
    <text evidence="4 5">Cytoplasmic intermediate filaments provide mechanical strength to cells. Not essential protein. Component of the terminal web (organelle-depleted, intermediate filament-rich layer of cytoplasm that underlies the apical microvilli of polarized epithelial cells) in embryonic through to adult gut cells. Correct localization of filaments requires let-413.</text>
</comment>
<comment type="interaction">
    <interactant intactId="EBI-320062">
        <id>Q19286</id>
    </interactant>
    <interactant intactId="EBI-2413939">
        <id>A7DTF5</id>
        <label>CELE_Y56A3A.7</label>
    </interactant>
    <organismsDiffer>false</organismsDiffer>
    <experiments>4</experiments>
</comment>
<comment type="subcellular location">
    <subcellularLocation>
        <location evidence="5">Cytoplasm</location>
    </subcellularLocation>
</comment>
<comment type="alternative products">
    <event type="alternative splicing"/>
    <isoform>
        <id>Q19286-1</id>
        <name>a</name>
        <name>b2-H</name>
        <sequence type="displayed"/>
    </isoform>
    <isoform>
        <id>Q19286-2</id>
        <name>c</name>
        <name>b2-L</name>
        <sequence type="described" ref="VSP_010148"/>
    </isoform>
</comment>
<comment type="tissue specificity">
    <text evidence="5">Expression is restricted to a discrete circumferential subapical layer within the intestinal terminal web (known as the 'endotube'); this layer joins directly to the apical junction complexes that connect adjacent gut cells.</text>
</comment>
<comment type="developmental stage">
    <text evidence="5">Lima bean stage of embryogenesis into adulthood.</text>
</comment>
<comment type="similarity">
    <text evidence="2">Belongs to the intermediate filament family.</text>
</comment>
<organism>
    <name type="scientific">Caenorhabditis elegans</name>
    <dbReference type="NCBI Taxonomy" id="6239"/>
    <lineage>
        <taxon>Eukaryota</taxon>
        <taxon>Metazoa</taxon>
        <taxon>Ecdysozoa</taxon>
        <taxon>Nematoda</taxon>
        <taxon>Chromadorea</taxon>
        <taxon>Rhabditida</taxon>
        <taxon>Rhabditina</taxon>
        <taxon>Rhabditomorpha</taxon>
        <taxon>Rhabditoidea</taxon>
        <taxon>Rhabditidae</taxon>
        <taxon>Peloderinae</taxon>
        <taxon>Caenorhabditis</taxon>
    </lineage>
</organism>
<protein>
    <recommendedName>
        <fullName>Intermediate filament protein ifb-2</fullName>
    </recommendedName>
    <alternativeName>
        <fullName>Cel IF B2</fullName>
    </alternativeName>
    <alternativeName>
        <fullName>Intermediate filament protein B2</fullName>
        <shortName>IF-B2</shortName>
    </alternativeName>
</protein>
<reference key="1">
    <citation type="journal article" date="1994" name="EMBO J.">
        <title>Eight genes and alternative RNA processing pathways generate an unexpectedly large diversity of cytoplasmic intermediate filament proteins in the nematode Caenorhabditis elegans.</title>
        <authorList>
            <person name="Dodemont H."/>
            <person name="Riemer D."/>
            <person name="Ledger T.N."/>
            <person name="Weber K."/>
        </authorList>
    </citation>
    <scope>NUCLEOTIDE SEQUENCE [GENOMIC DNA] (ISOFORMS A AND C)</scope>
    <scope>ALTERNATIVE SPLICING</scope>
    <source>
        <strain>Bristol N2</strain>
    </source>
</reference>
<reference key="2">
    <citation type="journal article" date="1998" name="Science">
        <title>Genome sequence of the nematode C. elegans: a platform for investigating biology.</title>
        <authorList>
            <consortium name="The C. elegans sequencing consortium"/>
        </authorList>
    </citation>
    <scope>NUCLEOTIDE SEQUENCE [LARGE SCALE GENOMIC DNA]</scope>
    <scope>ALTERNATIVE SPLICING</scope>
    <source>
        <strain>Bristol N2</strain>
    </source>
</reference>
<reference key="3">
    <citation type="journal article" date="2001" name="Proc. Natl. Acad. Sci. U.S.A.">
        <title>Essential roles for four cytoplasmic intermediate filament proteins in Caenorhabditis elegans development.</title>
        <authorList>
            <person name="Karabinos A."/>
            <person name="Schmidt H."/>
            <person name="Harborth J."/>
            <person name="Schnabel R."/>
            <person name="Weber K."/>
        </authorList>
    </citation>
    <scope>FUNCTION</scope>
</reference>
<reference key="4">
    <citation type="journal article" date="2004" name="Dev. Biol.">
        <title>The apical disposition of the Caenorhabditis elegans intestinal terminal web is maintained by LET-413.</title>
        <authorList>
            <person name="Bossinger O."/>
            <person name="Fukushige T."/>
            <person name="Claeys M."/>
            <person name="Borgonie G."/>
            <person name="McGhee J.D."/>
        </authorList>
    </citation>
    <scope>FUNCTION</scope>
    <scope>SUBCELLULAR LOCATION</scope>
    <scope>TISSUE SPECIFICITY</scope>
    <scope>DEVELOPMENTAL STAGE</scope>
</reference>